<comment type="function">
    <text evidence="1">Involved in the anomeric conversion of L-rhamnose.</text>
</comment>
<comment type="catalytic activity">
    <reaction evidence="1">
        <text>alpha-L-rhamnose = beta-L-rhamnose</text>
        <dbReference type="Rhea" id="RHEA:25584"/>
        <dbReference type="ChEBI" id="CHEBI:27586"/>
        <dbReference type="ChEBI" id="CHEBI:27907"/>
        <dbReference type="EC" id="5.1.3.32"/>
    </reaction>
</comment>
<comment type="pathway">
    <text evidence="1">Carbohydrate metabolism; L-rhamnose metabolism.</text>
</comment>
<comment type="subunit">
    <text evidence="1">Homodimer.</text>
</comment>
<comment type="subcellular location">
    <subcellularLocation>
        <location evidence="1">Cytoplasm</location>
    </subcellularLocation>
</comment>
<comment type="similarity">
    <text evidence="1">Belongs to the rhamnose mutarotase family.</text>
</comment>
<gene>
    <name evidence="1" type="primary">rhaM</name>
    <name type="ordered locus">SFV_3594</name>
</gene>
<accession>Q0SZ91</accession>
<organism>
    <name type="scientific">Shigella flexneri serotype 5b (strain 8401)</name>
    <dbReference type="NCBI Taxonomy" id="373384"/>
    <lineage>
        <taxon>Bacteria</taxon>
        <taxon>Pseudomonadati</taxon>
        <taxon>Pseudomonadota</taxon>
        <taxon>Gammaproteobacteria</taxon>
        <taxon>Enterobacterales</taxon>
        <taxon>Enterobacteriaceae</taxon>
        <taxon>Shigella</taxon>
    </lineage>
</organism>
<protein>
    <recommendedName>
        <fullName evidence="1">L-rhamnose mutarotase</fullName>
        <ecNumber evidence="1">5.1.3.32</ecNumber>
    </recommendedName>
    <alternativeName>
        <fullName evidence="1">Rhamnose 1-epimerase</fullName>
    </alternativeName>
    <alternativeName>
        <fullName evidence="1">Type-3 mutarotase</fullName>
    </alternativeName>
</protein>
<name>RHAM_SHIF8</name>
<sequence length="104" mass="12293">MIRKAFVMQVNPDAHEEYQRRHNPIWPELEAVLKSHGVHNYAIYLDKARNLLFAMVEIESEERWNAVASTDVCQRWWKYMTDVMPANPDNSPVSSELQEVFYLP</sequence>
<evidence type="ECO:0000255" key="1">
    <source>
        <dbReference type="HAMAP-Rule" id="MF_01663"/>
    </source>
</evidence>
<reference key="1">
    <citation type="journal article" date="2006" name="BMC Genomics">
        <title>Complete genome sequence of Shigella flexneri 5b and comparison with Shigella flexneri 2a.</title>
        <authorList>
            <person name="Nie H."/>
            <person name="Yang F."/>
            <person name="Zhang X."/>
            <person name="Yang J."/>
            <person name="Chen L."/>
            <person name="Wang J."/>
            <person name="Xiong Z."/>
            <person name="Peng J."/>
            <person name="Sun L."/>
            <person name="Dong J."/>
            <person name="Xue Y."/>
            <person name="Xu X."/>
            <person name="Chen S."/>
            <person name="Yao Z."/>
            <person name="Shen Y."/>
            <person name="Jin Q."/>
        </authorList>
    </citation>
    <scope>NUCLEOTIDE SEQUENCE [LARGE SCALE GENOMIC DNA]</scope>
    <source>
        <strain>8401</strain>
    </source>
</reference>
<dbReference type="EC" id="5.1.3.32" evidence="1"/>
<dbReference type="EMBL" id="CP000266">
    <property type="protein sequence ID" value="ABF05624.1"/>
    <property type="molecule type" value="Genomic_DNA"/>
</dbReference>
<dbReference type="RefSeq" id="WP_000619511.1">
    <property type="nucleotide sequence ID" value="NC_008258.1"/>
</dbReference>
<dbReference type="SMR" id="Q0SZ91"/>
<dbReference type="KEGG" id="sfv:SFV_3594"/>
<dbReference type="HOGENOM" id="CLU_100689_2_0_6"/>
<dbReference type="UniPathway" id="UPA00125"/>
<dbReference type="Proteomes" id="UP000000659">
    <property type="component" value="Chromosome"/>
</dbReference>
<dbReference type="GO" id="GO:0005737">
    <property type="term" value="C:cytoplasm"/>
    <property type="evidence" value="ECO:0007669"/>
    <property type="project" value="UniProtKB-SubCell"/>
</dbReference>
<dbReference type="GO" id="GO:0062192">
    <property type="term" value="F:L-rhamnose mutarotase activity"/>
    <property type="evidence" value="ECO:0007669"/>
    <property type="project" value="UniProtKB-EC"/>
</dbReference>
<dbReference type="GO" id="GO:0019301">
    <property type="term" value="P:rhamnose catabolic process"/>
    <property type="evidence" value="ECO:0007669"/>
    <property type="project" value="TreeGrafter"/>
</dbReference>
<dbReference type="FunFam" id="3.30.70.100:FF:000013">
    <property type="entry name" value="L-rhamnose mutarotase"/>
    <property type="match status" value="1"/>
</dbReference>
<dbReference type="Gene3D" id="3.30.70.100">
    <property type="match status" value="1"/>
</dbReference>
<dbReference type="HAMAP" id="MF_01663">
    <property type="entry name" value="L_rham_rotase"/>
    <property type="match status" value="1"/>
</dbReference>
<dbReference type="InterPro" id="IPR011008">
    <property type="entry name" value="Dimeric_a/b-barrel"/>
</dbReference>
<dbReference type="InterPro" id="IPR013448">
    <property type="entry name" value="L-rhamnose_mutarotase"/>
</dbReference>
<dbReference type="InterPro" id="IPR008000">
    <property type="entry name" value="Rham/fucose_mutarotase"/>
</dbReference>
<dbReference type="NCBIfam" id="TIGR02625">
    <property type="entry name" value="YiiL_rotase"/>
    <property type="match status" value="1"/>
</dbReference>
<dbReference type="PANTHER" id="PTHR34389">
    <property type="entry name" value="L-RHAMNOSE MUTAROTASE"/>
    <property type="match status" value="1"/>
</dbReference>
<dbReference type="PANTHER" id="PTHR34389:SF2">
    <property type="entry name" value="L-RHAMNOSE MUTAROTASE"/>
    <property type="match status" value="1"/>
</dbReference>
<dbReference type="Pfam" id="PF05336">
    <property type="entry name" value="rhaM"/>
    <property type="match status" value="1"/>
</dbReference>
<dbReference type="SUPFAM" id="SSF54909">
    <property type="entry name" value="Dimeric alpha+beta barrel"/>
    <property type="match status" value="1"/>
</dbReference>
<feature type="chain" id="PRO_0000344607" description="L-rhamnose mutarotase">
    <location>
        <begin position="1"/>
        <end position="104"/>
    </location>
</feature>
<feature type="active site" description="Proton donor" evidence="1">
    <location>
        <position position="22"/>
    </location>
</feature>
<feature type="binding site" evidence="1">
    <location>
        <position position="18"/>
    </location>
    <ligand>
        <name>substrate</name>
    </ligand>
</feature>
<feature type="binding site" evidence="1">
    <location>
        <position position="41"/>
    </location>
    <ligand>
        <name>substrate</name>
    </ligand>
</feature>
<feature type="binding site" evidence="1">
    <location>
        <begin position="76"/>
        <end position="77"/>
    </location>
    <ligand>
        <name>substrate</name>
    </ligand>
</feature>
<keyword id="KW-0119">Carbohydrate metabolism</keyword>
<keyword id="KW-0963">Cytoplasm</keyword>
<keyword id="KW-0413">Isomerase</keyword>
<keyword id="KW-0684">Rhamnose metabolism</keyword>
<proteinExistence type="inferred from homology"/>